<reference key="1">
    <citation type="journal article" date="2007" name="PLoS Genet.">
        <title>Genome analysis of Minibacterium massiliensis highlights the convergent evolution of water-living bacteria.</title>
        <authorList>
            <person name="Audic S."/>
            <person name="Robert C."/>
            <person name="Campagna B."/>
            <person name="Parinello H."/>
            <person name="Claverie J.-M."/>
            <person name="Raoult D."/>
            <person name="Drancourt M."/>
        </authorList>
    </citation>
    <scope>NUCLEOTIDE SEQUENCE [LARGE SCALE GENOMIC DNA]</scope>
    <source>
        <strain>Marseille</strain>
    </source>
</reference>
<comment type="function">
    <text evidence="1">Allows the formation of correctly charged Asn-tRNA(Asn) or Gln-tRNA(Gln) through the transamidation of misacylated Asp-tRNA(Asn) or Glu-tRNA(Gln) in organisms which lack either or both of asparaginyl-tRNA or glutaminyl-tRNA synthetases. The reaction takes place in the presence of glutamine and ATP through an activated phospho-Asp-tRNA(Asn) or phospho-Glu-tRNA(Gln).</text>
</comment>
<comment type="catalytic activity">
    <reaction evidence="1">
        <text>L-glutamyl-tRNA(Gln) + L-glutamine + ATP + H2O = L-glutaminyl-tRNA(Gln) + L-glutamate + ADP + phosphate + H(+)</text>
        <dbReference type="Rhea" id="RHEA:17521"/>
        <dbReference type="Rhea" id="RHEA-COMP:9681"/>
        <dbReference type="Rhea" id="RHEA-COMP:9684"/>
        <dbReference type="ChEBI" id="CHEBI:15377"/>
        <dbReference type="ChEBI" id="CHEBI:15378"/>
        <dbReference type="ChEBI" id="CHEBI:29985"/>
        <dbReference type="ChEBI" id="CHEBI:30616"/>
        <dbReference type="ChEBI" id="CHEBI:43474"/>
        <dbReference type="ChEBI" id="CHEBI:58359"/>
        <dbReference type="ChEBI" id="CHEBI:78520"/>
        <dbReference type="ChEBI" id="CHEBI:78521"/>
        <dbReference type="ChEBI" id="CHEBI:456216"/>
    </reaction>
</comment>
<comment type="catalytic activity">
    <reaction evidence="1">
        <text>L-aspartyl-tRNA(Asn) + L-glutamine + ATP + H2O = L-asparaginyl-tRNA(Asn) + L-glutamate + ADP + phosphate + 2 H(+)</text>
        <dbReference type="Rhea" id="RHEA:14513"/>
        <dbReference type="Rhea" id="RHEA-COMP:9674"/>
        <dbReference type="Rhea" id="RHEA-COMP:9677"/>
        <dbReference type="ChEBI" id="CHEBI:15377"/>
        <dbReference type="ChEBI" id="CHEBI:15378"/>
        <dbReference type="ChEBI" id="CHEBI:29985"/>
        <dbReference type="ChEBI" id="CHEBI:30616"/>
        <dbReference type="ChEBI" id="CHEBI:43474"/>
        <dbReference type="ChEBI" id="CHEBI:58359"/>
        <dbReference type="ChEBI" id="CHEBI:78515"/>
        <dbReference type="ChEBI" id="CHEBI:78516"/>
        <dbReference type="ChEBI" id="CHEBI:456216"/>
    </reaction>
</comment>
<comment type="subunit">
    <text evidence="1">Heterotrimer of A, B and C subunits.</text>
</comment>
<comment type="similarity">
    <text evidence="1">Belongs to the GatC family.</text>
</comment>
<keyword id="KW-0067">ATP-binding</keyword>
<keyword id="KW-0436">Ligase</keyword>
<keyword id="KW-0547">Nucleotide-binding</keyword>
<keyword id="KW-0648">Protein biosynthesis</keyword>
<evidence type="ECO:0000255" key="1">
    <source>
        <dbReference type="HAMAP-Rule" id="MF_00122"/>
    </source>
</evidence>
<dbReference type="EC" id="6.3.5.-" evidence="1"/>
<dbReference type="EMBL" id="CP000269">
    <property type="protein sequence ID" value="ABR89083.1"/>
    <property type="molecule type" value="Genomic_DNA"/>
</dbReference>
<dbReference type="RefSeq" id="WP_011979421.1">
    <property type="nucleotide sequence ID" value="NC_009659.1"/>
</dbReference>
<dbReference type="SMR" id="A6SUD8"/>
<dbReference type="STRING" id="375286.mma_0195"/>
<dbReference type="KEGG" id="mms:mma_0195"/>
<dbReference type="eggNOG" id="COG0721">
    <property type="taxonomic scope" value="Bacteria"/>
</dbReference>
<dbReference type="HOGENOM" id="CLU_105899_2_2_4"/>
<dbReference type="OrthoDB" id="9794326at2"/>
<dbReference type="Proteomes" id="UP000006388">
    <property type="component" value="Chromosome"/>
</dbReference>
<dbReference type="GO" id="GO:0050566">
    <property type="term" value="F:asparaginyl-tRNA synthase (glutamine-hydrolyzing) activity"/>
    <property type="evidence" value="ECO:0007669"/>
    <property type="project" value="RHEA"/>
</dbReference>
<dbReference type="GO" id="GO:0005524">
    <property type="term" value="F:ATP binding"/>
    <property type="evidence" value="ECO:0007669"/>
    <property type="project" value="UniProtKB-KW"/>
</dbReference>
<dbReference type="GO" id="GO:0050567">
    <property type="term" value="F:glutaminyl-tRNA synthase (glutamine-hydrolyzing) activity"/>
    <property type="evidence" value="ECO:0007669"/>
    <property type="project" value="UniProtKB-UniRule"/>
</dbReference>
<dbReference type="GO" id="GO:0070681">
    <property type="term" value="P:glutaminyl-tRNAGln biosynthesis via transamidation"/>
    <property type="evidence" value="ECO:0007669"/>
    <property type="project" value="TreeGrafter"/>
</dbReference>
<dbReference type="GO" id="GO:0006450">
    <property type="term" value="P:regulation of translational fidelity"/>
    <property type="evidence" value="ECO:0007669"/>
    <property type="project" value="InterPro"/>
</dbReference>
<dbReference type="GO" id="GO:0006412">
    <property type="term" value="P:translation"/>
    <property type="evidence" value="ECO:0007669"/>
    <property type="project" value="UniProtKB-UniRule"/>
</dbReference>
<dbReference type="Gene3D" id="1.10.20.60">
    <property type="entry name" value="Glu-tRNAGln amidotransferase C subunit, N-terminal domain"/>
    <property type="match status" value="1"/>
</dbReference>
<dbReference type="HAMAP" id="MF_00122">
    <property type="entry name" value="GatC"/>
    <property type="match status" value="1"/>
</dbReference>
<dbReference type="InterPro" id="IPR036113">
    <property type="entry name" value="Asp/Glu-ADT_sf_sub_c"/>
</dbReference>
<dbReference type="InterPro" id="IPR003837">
    <property type="entry name" value="GatC"/>
</dbReference>
<dbReference type="NCBIfam" id="TIGR00135">
    <property type="entry name" value="gatC"/>
    <property type="match status" value="1"/>
</dbReference>
<dbReference type="PANTHER" id="PTHR15004">
    <property type="entry name" value="GLUTAMYL-TRNA(GLN) AMIDOTRANSFERASE SUBUNIT C, MITOCHONDRIAL"/>
    <property type="match status" value="1"/>
</dbReference>
<dbReference type="PANTHER" id="PTHR15004:SF0">
    <property type="entry name" value="GLUTAMYL-TRNA(GLN) AMIDOTRANSFERASE SUBUNIT C, MITOCHONDRIAL"/>
    <property type="match status" value="1"/>
</dbReference>
<dbReference type="Pfam" id="PF02686">
    <property type="entry name" value="GatC"/>
    <property type="match status" value="1"/>
</dbReference>
<dbReference type="SUPFAM" id="SSF141000">
    <property type="entry name" value="Glu-tRNAGln amidotransferase C subunit"/>
    <property type="match status" value="1"/>
</dbReference>
<feature type="chain" id="PRO_1000016131" description="Aspartyl/glutamyl-tRNA(Asn/Gln) amidotransferase subunit C">
    <location>
        <begin position="1"/>
        <end position="100"/>
    </location>
</feature>
<sequence>MSLELSDVKRLSTLAQIELTTEQSAQTLDKLNGIFALVEQLRAVDTTGIEPLNHPIATMLPDLALRLREDVVSEANRRDDYQKVAPATQDGLYLVPKVIE</sequence>
<name>GATC_JANMA</name>
<gene>
    <name evidence="1" type="primary">gatC</name>
    <name type="ordered locus">mma_0195</name>
</gene>
<organism>
    <name type="scientific">Janthinobacterium sp. (strain Marseille)</name>
    <name type="common">Minibacterium massiliensis</name>
    <dbReference type="NCBI Taxonomy" id="375286"/>
    <lineage>
        <taxon>Bacteria</taxon>
        <taxon>Pseudomonadati</taxon>
        <taxon>Pseudomonadota</taxon>
        <taxon>Betaproteobacteria</taxon>
        <taxon>Burkholderiales</taxon>
        <taxon>Oxalobacteraceae</taxon>
        <taxon>Janthinobacterium</taxon>
    </lineage>
</organism>
<protein>
    <recommendedName>
        <fullName evidence="1">Aspartyl/glutamyl-tRNA(Asn/Gln) amidotransferase subunit C</fullName>
        <shortName evidence="1">Asp/Glu-ADT subunit C</shortName>
        <ecNumber evidence="1">6.3.5.-</ecNumber>
    </recommendedName>
</protein>
<accession>A6SUD8</accession>
<proteinExistence type="inferred from homology"/>